<proteinExistence type="inferred from homology"/>
<protein>
    <recommendedName>
        <fullName evidence="1">4-diphosphocytidyl-2-C-methyl-D-erythritol kinase</fullName>
        <shortName evidence="1">CMK</shortName>
        <ecNumber evidence="1">2.7.1.148</ecNumber>
    </recommendedName>
    <alternativeName>
        <fullName evidence="1">4-(cytidine-5'-diphospho)-2-C-methyl-D-erythritol kinase</fullName>
    </alternativeName>
</protein>
<dbReference type="EC" id="2.7.1.148" evidence="1"/>
<dbReference type="EMBL" id="CP001022">
    <property type="protein sequence ID" value="ACB59525.1"/>
    <property type="molecule type" value="Genomic_DNA"/>
</dbReference>
<dbReference type="RefSeq" id="WP_012368951.1">
    <property type="nucleotide sequence ID" value="NC_010556.1"/>
</dbReference>
<dbReference type="SMR" id="B1YGP2"/>
<dbReference type="STRING" id="262543.Exig_0038"/>
<dbReference type="KEGG" id="esi:Exig_0038"/>
<dbReference type="eggNOG" id="COG1947">
    <property type="taxonomic scope" value="Bacteria"/>
</dbReference>
<dbReference type="HOGENOM" id="CLU_053057_1_1_9"/>
<dbReference type="OrthoDB" id="9809438at2"/>
<dbReference type="UniPathway" id="UPA00056">
    <property type="reaction ID" value="UER00094"/>
</dbReference>
<dbReference type="Proteomes" id="UP000001681">
    <property type="component" value="Chromosome"/>
</dbReference>
<dbReference type="GO" id="GO:0050515">
    <property type="term" value="F:4-(cytidine 5'-diphospho)-2-C-methyl-D-erythritol kinase activity"/>
    <property type="evidence" value="ECO:0007669"/>
    <property type="project" value="UniProtKB-UniRule"/>
</dbReference>
<dbReference type="GO" id="GO:0005524">
    <property type="term" value="F:ATP binding"/>
    <property type="evidence" value="ECO:0007669"/>
    <property type="project" value="UniProtKB-UniRule"/>
</dbReference>
<dbReference type="GO" id="GO:0019288">
    <property type="term" value="P:isopentenyl diphosphate biosynthetic process, methylerythritol 4-phosphate pathway"/>
    <property type="evidence" value="ECO:0007669"/>
    <property type="project" value="UniProtKB-UniRule"/>
</dbReference>
<dbReference type="GO" id="GO:0016114">
    <property type="term" value="P:terpenoid biosynthetic process"/>
    <property type="evidence" value="ECO:0007669"/>
    <property type="project" value="InterPro"/>
</dbReference>
<dbReference type="FunFam" id="3.30.230.10:FF:000029">
    <property type="entry name" value="4-diphosphocytidyl-2-C-methyl-D-erythritol kinase"/>
    <property type="match status" value="1"/>
</dbReference>
<dbReference type="FunFam" id="3.30.70.890:FF:000006">
    <property type="entry name" value="4-diphosphocytidyl-2-C-methyl-D-erythritol kinase"/>
    <property type="match status" value="1"/>
</dbReference>
<dbReference type="Gene3D" id="3.30.230.10">
    <property type="match status" value="1"/>
</dbReference>
<dbReference type="Gene3D" id="3.30.70.890">
    <property type="entry name" value="GHMP kinase, C-terminal domain"/>
    <property type="match status" value="1"/>
</dbReference>
<dbReference type="HAMAP" id="MF_00061">
    <property type="entry name" value="IspE"/>
    <property type="match status" value="1"/>
</dbReference>
<dbReference type="InterPro" id="IPR013750">
    <property type="entry name" value="GHMP_kinase_C_dom"/>
</dbReference>
<dbReference type="InterPro" id="IPR036554">
    <property type="entry name" value="GHMP_kinase_C_sf"/>
</dbReference>
<dbReference type="InterPro" id="IPR006204">
    <property type="entry name" value="GHMP_kinase_N_dom"/>
</dbReference>
<dbReference type="InterPro" id="IPR004424">
    <property type="entry name" value="IspE"/>
</dbReference>
<dbReference type="InterPro" id="IPR020568">
    <property type="entry name" value="Ribosomal_Su5_D2-typ_SF"/>
</dbReference>
<dbReference type="InterPro" id="IPR014721">
    <property type="entry name" value="Ribsml_uS5_D2-typ_fold_subgr"/>
</dbReference>
<dbReference type="NCBIfam" id="TIGR00154">
    <property type="entry name" value="ispE"/>
    <property type="match status" value="1"/>
</dbReference>
<dbReference type="NCBIfam" id="NF011202">
    <property type="entry name" value="PRK14608.1"/>
    <property type="match status" value="1"/>
</dbReference>
<dbReference type="PANTHER" id="PTHR43527">
    <property type="entry name" value="4-DIPHOSPHOCYTIDYL-2-C-METHYL-D-ERYTHRITOL KINASE, CHLOROPLASTIC"/>
    <property type="match status" value="1"/>
</dbReference>
<dbReference type="PANTHER" id="PTHR43527:SF2">
    <property type="entry name" value="4-DIPHOSPHOCYTIDYL-2-C-METHYL-D-ERYTHRITOL KINASE, CHLOROPLASTIC"/>
    <property type="match status" value="1"/>
</dbReference>
<dbReference type="Pfam" id="PF08544">
    <property type="entry name" value="GHMP_kinases_C"/>
    <property type="match status" value="1"/>
</dbReference>
<dbReference type="Pfam" id="PF00288">
    <property type="entry name" value="GHMP_kinases_N"/>
    <property type="match status" value="1"/>
</dbReference>
<dbReference type="PIRSF" id="PIRSF010376">
    <property type="entry name" value="IspE"/>
    <property type="match status" value="1"/>
</dbReference>
<dbReference type="SUPFAM" id="SSF55060">
    <property type="entry name" value="GHMP Kinase, C-terminal domain"/>
    <property type="match status" value="1"/>
</dbReference>
<dbReference type="SUPFAM" id="SSF54211">
    <property type="entry name" value="Ribosomal protein S5 domain 2-like"/>
    <property type="match status" value="1"/>
</dbReference>
<sequence length="286" mass="30736">MTIIVKAPAKINLVLDATAKRPDGYHDVHMVMTTVDLADRLELTELASGEIRMNAQHAYVPNDERNLAYKAAAVLKERFDIKSGVEIYLEKQIPVAAGLAGGSSDAAATLRGLNELWKLNLTLEQLAEIGSEVGSDVPFCVMGGTAIATGRGEKLEKLVSPPPCWVVLAKPTIGVSTADVYGALDLETAERPDVGAMIDAVKNQDFTAICESLGNVLESVTLPMHPEVEQIKAFMTSCGAEGVLMSGSGPTVFALTEHENRAQRLYNGLRGFCNEVYVVRLLGENH</sequence>
<accession>B1YGP2</accession>
<evidence type="ECO:0000255" key="1">
    <source>
        <dbReference type="HAMAP-Rule" id="MF_00061"/>
    </source>
</evidence>
<gene>
    <name evidence="1" type="primary">ispE</name>
    <name type="ordered locus">Exig_0038</name>
</gene>
<feature type="chain" id="PRO_1000092086" description="4-diphosphocytidyl-2-C-methyl-D-erythritol kinase">
    <location>
        <begin position="1"/>
        <end position="286"/>
    </location>
</feature>
<feature type="active site" evidence="1">
    <location>
        <position position="10"/>
    </location>
</feature>
<feature type="active site" evidence="1">
    <location>
        <position position="136"/>
    </location>
</feature>
<feature type="binding site" evidence="1">
    <location>
        <begin position="94"/>
        <end position="104"/>
    </location>
    <ligand>
        <name>ATP</name>
        <dbReference type="ChEBI" id="CHEBI:30616"/>
    </ligand>
</feature>
<name>ISPE_EXIS2</name>
<keyword id="KW-0067">ATP-binding</keyword>
<keyword id="KW-0414">Isoprene biosynthesis</keyword>
<keyword id="KW-0418">Kinase</keyword>
<keyword id="KW-0547">Nucleotide-binding</keyword>
<keyword id="KW-1185">Reference proteome</keyword>
<keyword id="KW-0808">Transferase</keyword>
<reference key="1">
    <citation type="submission" date="2008-04" db="EMBL/GenBank/DDBJ databases">
        <title>Complete sequence of chromosome of Exiguobacterium sibiricum 255-15.</title>
        <authorList>
            <consortium name="US DOE Joint Genome Institute"/>
            <person name="Copeland A."/>
            <person name="Lucas S."/>
            <person name="Lapidus A."/>
            <person name="Glavina del Rio T."/>
            <person name="Dalin E."/>
            <person name="Tice H."/>
            <person name="Bruce D."/>
            <person name="Goodwin L."/>
            <person name="Pitluck S."/>
            <person name="Kiss H."/>
            <person name="Chertkov O."/>
            <person name="Monk C."/>
            <person name="Brettin T."/>
            <person name="Detter J.C."/>
            <person name="Han C."/>
            <person name="Kuske C.R."/>
            <person name="Schmutz J."/>
            <person name="Larimer F."/>
            <person name="Land M."/>
            <person name="Hauser L."/>
            <person name="Kyrpides N."/>
            <person name="Mikhailova N."/>
            <person name="Vishnivetskaya T."/>
            <person name="Rodrigues D.F."/>
            <person name="Gilichinsky D."/>
            <person name="Tiedje J."/>
            <person name="Richardson P."/>
        </authorList>
    </citation>
    <scope>NUCLEOTIDE SEQUENCE [LARGE SCALE GENOMIC DNA]</scope>
    <source>
        <strain>DSM 17290 / CCUG 55495 / CIP 109462 / JCM 13490 / 255-15</strain>
    </source>
</reference>
<comment type="function">
    <text evidence="1">Catalyzes the phosphorylation of the position 2 hydroxy group of 4-diphosphocytidyl-2C-methyl-D-erythritol.</text>
</comment>
<comment type="catalytic activity">
    <reaction evidence="1">
        <text>4-CDP-2-C-methyl-D-erythritol + ATP = 4-CDP-2-C-methyl-D-erythritol 2-phosphate + ADP + H(+)</text>
        <dbReference type="Rhea" id="RHEA:18437"/>
        <dbReference type="ChEBI" id="CHEBI:15378"/>
        <dbReference type="ChEBI" id="CHEBI:30616"/>
        <dbReference type="ChEBI" id="CHEBI:57823"/>
        <dbReference type="ChEBI" id="CHEBI:57919"/>
        <dbReference type="ChEBI" id="CHEBI:456216"/>
        <dbReference type="EC" id="2.7.1.148"/>
    </reaction>
</comment>
<comment type="pathway">
    <text evidence="1">Isoprenoid biosynthesis; isopentenyl diphosphate biosynthesis via DXP pathway; isopentenyl diphosphate from 1-deoxy-D-xylulose 5-phosphate: step 3/6.</text>
</comment>
<comment type="similarity">
    <text evidence="1">Belongs to the GHMP kinase family. IspE subfamily.</text>
</comment>
<organism>
    <name type="scientific">Exiguobacterium sibiricum (strain DSM 17290 / CCUG 55495 / CIP 109462 / JCM 13490 / 255-15)</name>
    <dbReference type="NCBI Taxonomy" id="262543"/>
    <lineage>
        <taxon>Bacteria</taxon>
        <taxon>Bacillati</taxon>
        <taxon>Bacillota</taxon>
        <taxon>Bacilli</taxon>
        <taxon>Bacillales</taxon>
        <taxon>Bacillales Family XII. Incertae Sedis</taxon>
        <taxon>Exiguobacterium</taxon>
    </lineage>
</organism>